<name>ACCA_GLOVI</name>
<proteinExistence type="inferred from homology"/>
<gene>
    <name evidence="1" type="primary">accA</name>
    <name type="ordered locus">gll2864</name>
</gene>
<comment type="function">
    <text evidence="1">Component of the acetyl coenzyme A carboxylase (ACC) complex. First, biotin carboxylase catalyzes the carboxylation of biotin on its carrier protein (BCCP) and then the CO(2) group is transferred by the carboxyltransferase to acetyl-CoA to form malonyl-CoA.</text>
</comment>
<comment type="catalytic activity">
    <reaction evidence="1">
        <text>N(6)-carboxybiotinyl-L-lysyl-[protein] + acetyl-CoA = N(6)-biotinyl-L-lysyl-[protein] + malonyl-CoA</text>
        <dbReference type="Rhea" id="RHEA:54728"/>
        <dbReference type="Rhea" id="RHEA-COMP:10505"/>
        <dbReference type="Rhea" id="RHEA-COMP:10506"/>
        <dbReference type="ChEBI" id="CHEBI:57288"/>
        <dbReference type="ChEBI" id="CHEBI:57384"/>
        <dbReference type="ChEBI" id="CHEBI:83144"/>
        <dbReference type="ChEBI" id="CHEBI:83145"/>
        <dbReference type="EC" id="2.1.3.15"/>
    </reaction>
</comment>
<comment type="pathway">
    <text evidence="1">Lipid metabolism; malonyl-CoA biosynthesis; malonyl-CoA from acetyl-CoA: step 1/1.</text>
</comment>
<comment type="subunit">
    <text evidence="1">Acetyl-CoA carboxylase is a heterohexamer composed of biotin carboxyl carrier protein (AccB), biotin carboxylase (AccC) and two subunits each of ACCase subunit alpha (AccA) and ACCase subunit beta (AccD).</text>
</comment>
<comment type="subcellular location">
    <subcellularLocation>
        <location evidence="1">Cytoplasm</location>
    </subcellularLocation>
</comment>
<comment type="similarity">
    <text evidence="1">Belongs to the AccA family.</text>
</comment>
<accession>Q7NCW2</accession>
<dbReference type="EC" id="2.1.3.15" evidence="1"/>
<dbReference type="EMBL" id="BA000045">
    <property type="protein sequence ID" value="BAC90805.1"/>
    <property type="molecule type" value="Genomic_DNA"/>
</dbReference>
<dbReference type="RefSeq" id="NP_925810.1">
    <property type="nucleotide sequence ID" value="NC_005125.1"/>
</dbReference>
<dbReference type="RefSeq" id="WP_011142858.1">
    <property type="nucleotide sequence ID" value="NC_005125.1"/>
</dbReference>
<dbReference type="SMR" id="Q7NCW2"/>
<dbReference type="FunCoup" id="Q7NCW2">
    <property type="interactions" value="16"/>
</dbReference>
<dbReference type="STRING" id="251221.gene:10760368"/>
<dbReference type="EnsemblBacteria" id="BAC90805">
    <property type="protein sequence ID" value="BAC90805"/>
    <property type="gene ID" value="BAC90805"/>
</dbReference>
<dbReference type="KEGG" id="gvi:gll2864"/>
<dbReference type="PATRIC" id="fig|251221.4.peg.2893"/>
<dbReference type="eggNOG" id="COG0825">
    <property type="taxonomic scope" value="Bacteria"/>
</dbReference>
<dbReference type="HOGENOM" id="CLU_015486_0_2_3"/>
<dbReference type="InParanoid" id="Q7NCW2"/>
<dbReference type="OrthoDB" id="9808023at2"/>
<dbReference type="PhylomeDB" id="Q7NCW2"/>
<dbReference type="UniPathway" id="UPA00655">
    <property type="reaction ID" value="UER00711"/>
</dbReference>
<dbReference type="Proteomes" id="UP000000557">
    <property type="component" value="Chromosome"/>
</dbReference>
<dbReference type="GO" id="GO:0009317">
    <property type="term" value="C:acetyl-CoA carboxylase complex"/>
    <property type="evidence" value="ECO:0007669"/>
    <property type="project" value="InterPro"/>
</dbReference>
<dbReference type="GO" id="GO:0003989">
    <property type="term" value="F:acetyl-CoA carboxylase activity"/>
    <property type="evidence" value="ECO:0007669"/>
    <property type="project" value="InterPro"/>
</dbReference>
<dbReference type="GO" id="GO:0005524">
    <property type="term" value="F:ATP binding"/>
    <property type="evidence" value="ECO:0007669"/>
    <property type="project" value="UniProtKB-KW"/>
</dbReference>
<dbReference type="GO" id="GO:0016743">
    <property type="term" value="F:carboxyl- or carbamoyltransferase activity"/>
    <property type="evidence" value="ECO:0007669"/>
    <property type="project" value="UniProtKB-UniRule"/>
</dbReference>
<dbReference type="GO" id="GO:0006633">
    <property type="term" value="P:fatty acid biosynthetic process"/>
    <property type="evidence" value="ECO:0007669"/>
    <property type="project" value="UniProtKB-KW"/>
</dbReference>
<dbReference type="GO" id="GO:2001295">
    <property type="term" value="P:malonyl-CoA biosynthetic process"/>
    <property type="evidence" value="ECO:0007669"/>
    <property type="project" value="UniProtKB-UniRule"/>
</dbReference>
<dbReference type="Gene3D" id="3.90.226.10">
    <property type="entry name" value="2-enoyl-CoA Hydratase, Chain A, domain 1"/>
    <property type="match status" value="1"/>
</dbReference>
<dbReference type="HAMAP" id="MF_00823">
    <property type="entry name" value="AcetylCoA_CT_alpha"/>
    <property type="match status" value="1"/>
</dbReference>
<dbReference type="InterPro" id="IPR001095">
    <property type="entry name" value="Acetyl_CoA_COase_a_su"/>
</dbReference>
<dbReference type="InterPro" id="IPR029045">
    <property type="entry name" value="ClpP/crotonase-like_dom_sf"/>
</dbReference>
<dbReference type="InterPro" id="IPR011763">
    <property type="entry name" value="COA_CT_C"/>
</dbReference>
<dbReference type="NCBIfam" id="TIGR00513">
    <property type="entry name" value="accA"/>
    <property type="match status" value="1"/>
</dbReference>
<dbReference type="NCBIfam" id="NF041504">
    <property type="entry name" value="AccA_sub"/>
    <property type="match status" value="1"/>
</dbReference>
<dbReference type="NCBIfam" id="NF004344">
    <property type="entry name" value="PRK05724.1"/>
    <property type="match status" value="1"/>
</dbReference>
<dbReference type="PANTHER" id="PTHR42853">
    <property type="entry name" value="ACETYL-COENZYME A CARBOXYLASE CARBOXYL TRANSFERASE SUBUNIT ALPHA"/>
    <property type="match status" value="1"/>
</dbReference>
<dbReference type="PANTHER" id="PTHR42853:SF3">
    <property type="entry name" value="ACETYL-COENZYME A CARBOXYLASE CARBOXYL TRANSFERASE SUBUNIT ALPHA, CHLOROPLASTIC"/>
    <property type="match status" value="1"/>
</dbReference>
<dbReference type="Pfam" id="PF03255">
    <property type="entry name" value="ACCA"/>
    <property type="match status" value="1"/>
</dbReference>
<dbReference type="PRINTS" id="PR01069">
    <property type="entry name" value="ACCCTRFRASEA"/>
</dbReference>
<dbReference type="SUPFAM" id="SSF52096">
    <property type="entry name" value="ClpP/crotonase"/>
    <property type="match status" value="1"/>
</dbReference>
<dbReference type="PROSITE" id="PS50989">
    <property type="entry name" value="COA_CT_CTER"/>
    <property type="match status" value="1"/>
</dbReference>
<organism>
    <name type="scientific">Gloeobacter violaceus (strain ATCC 29082 / PCC 7421)</name>
    <dbReference type="NCBI Taxonomy" id="251221"/>
    <lineage>
        <taxon>Bacteria</taxon>
        <taxon>Bacillati</taxon>
        <taxon>Cyanobacteriota</taxon>
        <taxon>Cyanophyceae</taxon>
        <taxon>Gloeobacterales</taxon>
        <taxon>Gloeobacteraceae</taxon>
        <taxon>Gloeobacter</taxon>
    </lineage>
</organism>
<reference key="1">
    <citation type="journal article" date="2003" name="DNA Res.">
        <title>Complete genome structure of Gloeobacter violaceus PCC 7421, a cyanobacterium that lacks thylakoids.</title>
        <authorList>
            <person name="Nakamura Y."/>
            <person name="Kaneko T."/>
            <person name="Sato S."/>
            <person name="Mimuro M."/>
            <person name="Miyashita H."/>
            <person name="Tsuchiya T."/>
            <person name="Sasamoto S."/>
            <person name="Watanabe A."/>
            <person name="Kawashima K."/>
            <person name="Kishida Y."/>
            <person name="Kiyokawa C."/>
            <person name="Kohara M."/>
            <person name="Matsumoto M."/>
            <person name="Matsuno A."/>
            <person name="Nakazaki N."/>
            <person name="Shimpo S."/>
            <person name="Takeuchi C."/>
            <person name="Yamada M."/>
            <person name="Tabata S."/>
        </authorList>
    </citation>
    <scope>NUCLEOTIDE SEQUENCE [LARGE SCALE GENOMIC DNA]</scope>
    <source>
        <strain>ATCC 29082 / PCC 7421</strain>
    </source>
</reference>
<feature type="chain" id="PRO_0000223773" description="Acetyl-coenzyme A carboxylase carboxyl transferase subunit alpha">
    <location>
        <begin position="1"/>
        <end position="326"/>
    </location>
</feature>
<feature type="domain" description="CoA carboxyltransferase C-terminal" evidence="2">
    <location>
        <begin position="46"/>
        <end position="300"/>
    </location>
</feature>
<sequence length="326" mass="36469">MTQSRSATPGPSLDFERELMELETRLDDIRRFAEENNVDVSTQLAEIEARAAELRRDLYANLPPKDILQLARNPKRPSTLDYIQLLCEDWVELHGDRLFGDDLALVGGLARLGDHPVVIMGHQKGRDTKDNIQRNFGMPQPEGYRKALRLMDHANHFQLPIIALIDTPGAHAGVDAEQRGQGEAIARNLQHMFSYEVPILCAVIGEGGSGGALAIGVGNRMLMFEYAVYSVISPDSCSVILWRDKKHIEQAANALKITARDLKQLGIVDEIIPEPSGGAHRDPQRAAANLKEALLRHLDELLTLDGPTRRTQRYEKFRAMARFQEI</sequence>
<keyword id="KW-0067">ATP-binding</keyword>
<keyword id="KW-0963">Cytoplasm</keyword>
<keyword id="KW-0275">Fatty acid biosynthesis</keyword>
<keyword id="KW-0276">Fatty acid metabolism</keyword>
<keyword id="KW-0444">Lipid biosynthesis</keyword>
<keyword id="KW-0443">Lipid metabolism</keyword>
<keyword id="KW-0547">Nucleotide-binding</keyword>
<keyword id="KW-1185">Reference proteome</keyword>
<keyword id="KW-0808">Transferase</keyword>
<evidence type="ECO:0000255" key="1">
    <source>
        <dbReference type="HAMAP-Rule" id="MF_00823"/>
    </source>
</evidence>
<evidence type="ECO:0000255" key="2">
    <source>
        <dbReference type="PROSITE-ProRule" id="PRU01137"/>
    </source>
</evidence>
<protein>
    <recommendedName>
        <fullName evidence="1">Acetyl-coenzyme A carboxylase carboxyl transferase subunit alpha</fullName>
        <shortName evidence="1">ACCase subunit alpha</shortName>
        <shortName evidence="1">Acetyl-CoA carboxylase carboxyltransferase subunit alpha</shortName>
        <ecNumber evidence="1">2.1.3.15</ecNumber>
    </recommendedName>
</protein>